<dbReference type="EMBL" id="AP004562">
    <property type="protein sequence ID" value="BAD33098.1"/>
    <property type="status" value="ALT_SEQ"/>
    <property type="molecule type" value="Genomic_DNA"/>
</dbReference>
<dbReference type="EMBL" id="AP008214">
    <property type="protein sequence ID" value="BAF22774.2"/>
    <property type="molecule type" value="Genomic_DNA"/>
</dbReference>
<dbReference type="EMBL" id="AP014964">
    <property type="status" value="NOT_ANNOTATED_CDS"/>
    <property type="molecule type" value="Genomic_DNA"/>
</dbReference>
<dbReference type="RefSeq" id="XP_015649876.1">
    <property type="nucleotide sequence ID" value="XM_015794390.1"/>
</dbReference>
<dbReference type="SMR" id="Q69UI2"/>
<dbReference type="FunCoup" id="Q69UI2">
    <property type="interactions" value="2107"/>
</dbReference>
<dbReference type="STRING" id="39947.Q69UI2"/>
<dbReference type="PaxDb" id="39947-Q69UI2"/>
<dbReference type="KEGG" id="dosa:Os08g0117200"/>
<dbReference type="InParanoid" id="Q69UI2"/>
<dbReference type="OrthoDB" id="623277at2759"/>
<dbReference type="EvolutionaryTrace" id="Q69UI2"/>
<dbReference type="Proteomes" id="UP000000763">
    <property type="component" value="Chromosome 8"/>
</dbReference>
<dbReference type="Proteomes" id="UP000059680">
    <property type="component" value="Chromosome 8"/>
</dbReference>
<dbReference type="GO" id="GO:0022627">
    <property type="term" value="C:cytosolic small ribosomal subunit"/>
    <property type="evidence" value="ECO:0000318"/>
    <property type="project" value="GO_Central"/>
</dbReference>
<dbReference type="GO" id="GO:0005730">
    <property type="term" value="C:nucleolus"/>
    <property type="evidence" value="ECO:0000318"/>
    <property type="project" value="GO_Central"/>
</dbReference>
<dbReference type="GO" id="GO:0070181">
    <property type="term" value="F:small ribosomal subunit rRNA binding"/>
    <property type="evidence" value="ECO:0000318"/>
    <property type="project" value="GO_Central"/>
</dbReference>
<dbReference type="GO" id="GO:0003735">
    <property type="term" value="F:structural constituent of ribosome"/>
    <property type="evidence" value="ECO:0000318"/>
    <property type="project" value="GO_Central"/>
</dbReference>
<dbReference type="GO" id="GO:0006412">
    <property type="term" value="P:translation"/>
    <property type="evidence" value="ECO:0007669"/>
    <property type="project" value="InterPro"/>
</dbReference>
<dbReference type="CDD" id="cd00353">
    <property type="entry name" value="Ribosomal_S15p_S13e"/>
    <property type="match status" value="1"/>
</dbReference>
<dbReference type="FunFam" id="1.10.287.10:FF:000003">
    <property type="entry name" value="40S ribosomal protein S13"/>
    <property type="match status" value="1"/>
</dbReference>
<dbReference type="FunFam" id="4.10.860.130:FF:000001">
    <property type="entry name" value="40S ribosomal protein S13"/>
    <property type="match status" value="1"/>
</dbReference>
<dbReference type="Gene3D" id="4.10.860.130">
    <property type="match status" value="1"/>
</dbReference>
<dbReference type="Gene3D" id="1.10.287.10">
    <property type="entry name" value="S15/NS1, RNA-binding"/>
    <property type="match status" value="1"/>
</dbReference>
<dbReference type="HAMAP" id="MF_01343_A">
    <property type="entry name" value="Ribosomal_uS15_A"/>
    <property type="match status" value="1"/>
</dbReference>
<dbReference type="InterPro" id="IPR000589">
    <property type="entry name" value="Ribosomal_uS15"/>
</dbReference>
<dbReference type="InterPro" id="IPR023029">
    <property type="entry name" value="Ribosomal_uS15_arc_euk"/>
</dbReference>
<dbReference type="InterPro" id="IPR012606">
    <property type="entry name" value="Ribosomal_uS15_N"/>
</dbReference>
<dbReference type="InterPro" id="IPR009068">
    <property type="entry name" value="uS15_NS1_RNA-bd_sf"/>
</dbReference>
<dbReference type="NCBIfam" id="NF006331">
    <property type="entry name" value="PRK08561.1"/>
    <property type="match status" value="1"/>
</dbReference>
<dbReference type="PANTHER" id="PTHR11885">
    <property type="entry name" value="RIBOSOMAL PROTEIN S15P/S13E"/>
    <property type="match status" value="1"/>
</dbReference>
<dbReference type="PANTHER" id="PTHR11885:SF6">
    <property type="entry name" value="SMALL RIBOSOMAL SUBUNIT PROTEIN US15"/>
    <property type="match status" value="1"/>
</dbReference>
<dbReference type="Pfam" id="PF08069">
    <property type="entry name" value="Ribosomal_S13_N"/>
    <property type="match status" value="1"/>
</dbReference>
<dbReference type="Pfam" id="PF00312">
    <property type="entry name" value="Ribosomal_S15"/>
    <property type="match status" value="1"/>
</dbReference>
<dbReference type="SMART" id="SM01386">
    <property type="entry name" value="Ribosomal_S13_N"/>
    <property type="match status" value="1"/>
</dbReference>
<dbReference type="SMART" id="SM01387">
    <property type="entry name" value="Ribosomal_S15"/>
    <property type="match status" value="1"/>
</dbReference>
<dbReference type="SUPFAM" id="SSF47060">
    <property type="entry name" value="S15/NS1 RNA-binding domain"/>
    <property type="match status" value="1"/>
</dbReference>
<dbReference type="PROSITE" id="PS00362">
    <property type="entry name" value="RIBOSOMAL_S15"/>
    <property type="match status" value="1"/>
</dbReference>
<evidence type="ECO:0000305" key="1"/>
<organism>
    <name type="scientific">Oryza sativa subsp. japonica</name>
    <name type="common">Rice</name>
    <dbReference type="NCBI Taxonomy" id="39947"/>
    <lineage>
        <taxon>Eukaryota</taxon>
        <taxon>Viridiplantae</taxon>
        <taxon>Streptophyta</taxon>
        <taxon>Embryophyta</taxon>
        <taxon>Tracheophyta</taxon>
        <taxon>Spermatophyta</taxon>
        <taxon>Magnoliopsida</taxon>
        <taxon>Liliopsida</taxon>
        <taxon>Poales</taxon>
        <taxon>Poaceae</taxon>
        <taxon>BOP clade</taxon>
        <taxon>Oryzoideae</taxon>
        <taxon>Oryzeae</taxon>
        <taxon>Oryzinae</taxon>
        <taxon>Oryza</taxon>
        <taxon>Oryza sativa</taxon>
    </lineage>
</organism>
<gene>
    <name type="ordered locus">Os08g0117200</name>
    <name type="ordered locus">LOC_Os08g02400</name>
    <name type="ORF">P0470F10.17</name>
</gene>
<comment type="similarity">
    <text evidence="1">Belongs to the universal ribosomal protein uS15 family.</text>
</comment>
<comment type="sequence caution" evidence="1">
    <conflict type="erroneous gene model prediction">
        <sequence resource="EMBL-CDS" id="BAD33098"/>
    </conflict>
</comment>
<protein>
    <recommendedName>
        <fullName evidence="1">Small ribosomal subunit protein uS15z</fullName>
    </recommendedName>
    <alternativeName>
        <fullName>40S ribosomal protein S13-1</fullName>
    </alternativeName>
</protein>
<feature type="chain" id="PRO_0000352275" description="Small ribosomal subunit protein uS15z">
    <location>
        <begin position="1"/>
        <end position="151"/>
    </location>
</feature>
<keyword id="KW-1185">Reference proteome</keyword>
<keyword id="KW-0687">Ribonucleoprotein</keyword>
<keyword id="KW-0689">Ribosomal protein</keyword>
<sequence length="151" mass="17115">MGRMHSRGKGISSSAIPYKRTPPSWVKTAAADVEEMIMKAAKKGQMPSQIGVVLRDQHGIPLVKSVTGSKILRILKAHGLAPEIPEDLYFLIKKAVAIRKHLERNRKDKDSKFRLILVESRIHRLARYYKRTKKLPPTWKYESTTASTLVA</sequence>
<reference key="1">
    <citation type="journal article" date="2005" name="Nature">
        <title>The map-based sequence of the rice genome.</title>
        <authorList>
            <consortium name="International rice genome sequencing project (IRGSP)"/>
        </authorList>
    </citation>
    <scope>NUCLEOTIDE SEQUENCE [LARGE SCALE GENOMIC DNA]</scope>
    <source>
        <strain>cv. Nipponbare</strain>
    </source>
</reference>
<reference key="2">
    <citation type="journal article" date="2008" name="Nucleic Acids Res.">
        <title>The rice annotation project database (RAP-DB): 2008 update.</title>
        <authorList>
            <consortium name="The rice annotation project (RAP)"/>
        </authorList>
    </citation>
    <scope>GENOME REANNOTATION</scope>
    <source>
        <strain>cv. Nipponbare</strain>
    </source>
</reference>
<reference key="3">
    <citation type="journal article" date="2013" name="Rice">
        <title>Improvement of the Oryza sativa Nipponbare reference genome using next generation sequence and optical map data.</title>
        <authorList>
            <person name="Kawahara Y."/>
            <person name="de la Bastide M."/>
            <person name="Hamilton J.P."/>
            <person name="Kanamori H."/>
            <person name="McCombie W.R."/>
            <person name="Ouyang S."/>
            <person name="Schwartz D.C."/>
            <person name="Tanaka T."/>
            <person name="Wu J."/>
            <person name="Zhou S."/>
            <person name="Childs K.L."/>
            <person name="Davidson R.M."/>
            <person name="Lin H."/>
            <person name="Quesada-Ocampo L."/>
            <person name="Vaillancourt B."/>
            <person name="Sakai H."/>
            <person name="Lee S.S."/>
            <person name="Kim J."/>
            <person name="Numa H."/>
            <person name="Itoh T."/>
            <person name="Buell C.R."/>
            <person name="Matsumoto T."/>
        </authorList>
    </citation>
    <scope>GENOME REANNOTATION</scope>
    <source>
        <strain>cv. Nipponbare</strain>
    </source>
</reference>
<proteinExistence type="inferred from homology"/>
<accession>Q69UI2</accession>
<accession>Q0J8E1</accession>
<name>RS131_ORYSJ</name>